<organism>
    <name type="scientific">Fowlpox virus (strain NVSL)</name>
    <name type="common">FPV</name>
    <dbReference type="NCBI Taxonomy" id="928301"/>
    <lineage>
        <taxon>Viruses</taxon>
        <taxon>Varidnaviria</taxon>
        <taxon>Bamfordvirae</taxon>
        <taxon>Nucleocytoviricota</taxon>
        <taxon>Pokkesviricetes</taxon>
        <taxon>Chitovirales</taxon>
        <taxon>Poxviridae</taxon>
        <taxon>Chordopoxvirinae</taxon>
        <taxon>Avipoxvirus</taxon>
        <taxon>Fowlpox virus</taxon>
    </lineage>
</organism>
<proteinExistence type="predicted"/>
<reference key="1">
    <citation type="journal article" date="2000" name="J. Virol.">
        <title>The genome of fowlpox virus.</title>
        <authorList>
            <person name="Afonso C.L."/>
            <person name="Tulman E.R."/>
            <person name="Lu Z."/>
            <person name="Zsak L."/>
            <person name="Kutish G.F."/>
            <person name="Rock D.L."/>
        </authorList>
    </citation>
    <scope>NUCLEOTIDE SEQUENCE [LARGE SCALE GENOMIC DNA]</scope>
</reference>
<feature type="chain" id="PRO_0000067107" description="Putative ankyrin repeat protein FPV024">
    <location>
        <begin position="1"/>
        <end position="596"/>
    </location>
</feature>
<feature type="repeat" description="ANK 1">
    <location>
        <begin position="5"/>
        <end position="34"/>
    </location>
</feature>
<feature type="repeat" description="ANK 2">
    <location>
        <begin position="37"/>
        <end position="66"/>
    </location>
</feature>
<feature type="repeat" description="ANK 3">
    <location>
        <begin position="68"/>
        <end position="96"/>
    </location>
</feature>
<feature type="repeat" description="ANK 4">
    <location>
        <begin position="99"/>
        <end position="128"/>
    </location>
</feature>
<feature type="repeat" description="ANK 5">
    <location>
        <begin position="130"/>
        <end position="158"/>
    </location>
</feature>
<feature type="repeat" description="ANK 6">
    <location>
        <begin position="162"/>
        <end position="191"/>
    </location>
</feature>
<feature type="repeat" description="ANK 7">
    <location>
        <begin position="195"/>
        <end position="225"/>
    </location>
</feature>
<feature type="repeat" description="ANK 8">
    <location>
        <begin position="229"/>
        <end position="258"/>
    </location>
</feature>
<feature type="repeat" description="ANK 9">
    <location>
        <begin position="262"/>
        <end position="291"/>
    </location>
</feature>
<feature type="repeat" description="ANK 10">
    <location>
        <begin position="295"/>
        <end position="324"/>
    </location>
</feature>
<feature type="repeat" description="ANK 11">
    <location>
        <begin position="326"/>
        <end position="355"/>
    </location>
</feature>
<feature type="repeat" description="ANK 12">
    <location>
        <begin position="359"/>
        <end position="389"/>
    </location>
</feature>
<feature type="repeat" description="ANK 13">
    <location>
        <begin position="394"/>
        <end position="423"/>
    </location>
</feature>
<accession>Q9J5H7</accession>
<sequence>MGNEKLRKDLHRTIRTRDLNAVKHIILKKYTFSNKNALSTPLYLAVSNSDIDIVKFLLDNGADINKCKSPPLHKAINLGNVEMVKLLVDHGADIEKVYLGNSPLYLALCKRNTNITKYLLERGADPNTLFINYCDAIYNKIPIDIFKILIKYKVSLNIQNSHFKTPIYYAIKCTNYPLIKLLLENNASLTIPEGYNNHYLITAVKHNCDISILRLLIKYGVPVNEQDDLERTSLHYCVSAGKHDILKLLLDYDADPNITDSCLGTPLHYAVSRNDIIATTLLIEKGANVNIHNDTIDTVLNIAVGNRNKILINLLLMYGANTRLKSRNPLIHKALETKDINILSEILNHGAEVNIYNREGYTPLYIAIITFMQIKFAKLLLRYGSNPNMKNESNENTPLHGAILSNRLDSVELLMSYNVDVHSINKLGHTPLSCINYISDKIATIIISKIVLDLEKDSNLFLLDGFKANIECIDQNDRFKVIRKNCEDELKSIRNIKLNHRYSLSIFLHSDNNNNILIRFLNHPKVEKLSSCISIYKKYIQKTKLSSSIRYKLIHDAIEYSNNISMINSVPINVKYMIMEMLDNKDLKSIIDSVNK</sequence>
<protein>
    <recommendedName>
        <fullName>Putative ankyrin repeat protein FPV024</fullName>
    </recommendedName>
</protein>
<gene>
    <name type="ordered locus">FPV024</name>
</gene>
<organismHost>
    <name type="scientific">Vertebrata</name>
    <dbReference type="NCBI Taxonomy" id="7742"/>
</organismHost>
<keyword id="KW-0040">ANK repeat</keyword>
<keyword id="KW-1185">Reference proteome</keyword>
<keyword id="KW-0677">Repeat</keyword>
<dbReference type="EMBL" id="AF198100">
    <property type="protein sequence ID" value="AAF44368.1"/>
    <property type="molecule type" value="Genomic_DNA"/>
</dbReference>
<dbReference type="RefSeq" id="NP_038987.1">
    <property type="nucleotide sequence ID" value="NC_002188.1"/>
</dbReference>
<dbReference type="SMR" id="Q9J5H7"/>
<dbReference type="GeneID" id="1486743"/>
<dbReference type="KEGG" id="vg:1486743"/>
<dbReference type="Proteomes" id="UP000008597">
    <property type="component" value="Segment"/>
</dbReference>
<dbReference type="Gene3D" id="1.25.40.20">
    <property type="entry name" value="Ankyrin repeat-containing domain"/>
    <property type="match status" value="3"/>
</dbReference>
<dbReference type="InterPro" id="IPR002110">
    <property type="entry name" value="Ankyrin_rpt"/>
</dbReference>
<dbReference type="InterPro" id="IPR036770">
    <property type="entry name" value="Ankyrin_rpt-contain_sf"/>
</dbReference>
<dbReference type="InterPro" id="IPR018272">
    <property type="entry name" value="PRANC_domain"/>
</dbReference>
<dbReference type="PANTHER" id="PTHR24118">
    <property type="entry name" value="POTE ANKYRIN DOMAIN"/>
    <property type="match status" value="1"/>
</dbReference>
<dbReference type="PANTHER" id="PTHR24118:SF99">
    <property type="entry name" value="POTE ANKYRIN DOMAIN FAMILY MEMBER 3C-RELATED"/>
    <property type="match status" value="1"/>
</dbReference>
<dbReference type="Pfam" id="PF12796">
    <property type="entry name" value="Ank_2"/>
    <property type="match status" value="3"/>
</dbReference>
<dbReference type="Pfam" id="PF13606">
    <property type="entry name" value="Ank_3"/>
    <property type="match status" value="1"/>
</dbReference>
<dbReference type="Pfam" id="PF09372">
    <property type="entry name" value="PRANC"/>
    <property type="match status" value="1"/>
</dbReference>
<dbReference type="SMART" id="SM00248">
    <property type="entry name" value="ANK"/>
    <property type="match status" value="11"/>
</dbReference>
<dbReference type="SUPFAM" id="SSF48403">
    <property type="entry name" value="Ankyrin repeat"/>
    <property type="match status" value="2"/>
</dbReference>
<dbReference type="PROSITE" id="PS50297">
    <property type="entry name" value="ANK_REP_REGION"/>
    <property type="match status" value="1"/>
</dbReference>
<dbReference type="PROSITE" id="PS50088">
    <property type="entry name" value="ANK_REPEAT"/>
    <property type="match status" value="7"/>
</dbReference>
<name>V024_FOWPN</name>